<reference key="1">
    <citation type="journal article" date="2001" name="Science">
        <title>Complete genome sequence of a virulent isolate of Streptococcus pneumoniae.</title>
        <authorList>
            <person name="Tettelin H."/>
            <person name="Nelson K.E."/>
            <person name="Paulsen I.T."/>
            <person name="Eisen J.A."/>
            <person name="Read T.D."/>
            <person name="Peterson S.N."/>
            <person name="Heidelberg J.F."/>
            <person name="DeBoy R.T."/>
            <person name="Haft D.H."/>
            <person name="Dodson R.J."/>
            <person name="Durkin A.S."/>
            <person name="Gwinn M.L."/>
            <person name="Kolonay J.F."/>
            <person name="Nelson W.C."/>
            <person name="Peterson J.D."/>
            <person name="Umayam L.A."/>
            <person name="White O."/>
            <person name="Salzberg S.L."/>
            <person name="Lewis M.R."/>
            <person name="Radune D."/>
            <person name="Holtzapple E.K."/>
            <person name="Khouri H.M."/>
            <person name="Wolf A.M."/>
            <person name="Utterback T.R."/>
            <person name="Hansen C.L."/>
            <person name="McDonald L.A."/>
            <person name="Feldblyum T.V."/>
            <person name="Angiuoli S.V."/>
            <person name="Dickinson T."/>
            <person name="Hickey E.K."/>
            <person name="Holt I.E."/>
            <person name="Loftus B.J."/>
            <person name="Yang F."/>
            <person name="Smith H.O."/>
            <person name="Venter J.C."/>
            <person name="Dougherty B.A."/>
            <person name="Morrison D.A."/>
            <person name="Hollingshead S.K."/>
            <person name="Fraser C.M."/>
        </authorList>
    </citation>
    <scope>NUCLEOTIDE SEQUENCE [LARGE SCALE GENOMIC DNA]</scope>
    <source>
        <strain>ATCC BAA-334 / TIGR4</strain>
    </source>
</reference>
<sequence length="614" mass="70409">MNNLIKSKLELLPTSPGCYIHKDKNGTIIYVGKAKNLRNRVRSYFRGSHDTKTEALVSEIVDFEFIVTESNIEALLLEINLIKENKPKYNIMLKDDKSYPFIKITNERYPRLIITRQVKKDGGLYFGPYPDVGAANEIKRLLDRIFPFRKCTNPPSKVCFYYHIGQCMAHTICKKDEAYFKSMAQEVSDFLKGQDDKIIDDLKSKMAVAAQSMEFERAAEYRDLIQAIGTLRTKQRVMAKDLQNRDVFGYYVDKGWMCVQVFFVRQGKLIERDVNLFPYFNDPDEDFLTYVGQFYQEKSHLVPNEVLIPQDIDEEAVKALVDSKILKPQRGEKKQLVNLAIKNARVSLEQKFNLLEKSVEKTQGAIENLGRLLQIPTPVRIESFDNSNIMGTSPVSAMVVFVNGKPSKKDYRKYKIKTVVGPDDYASMREVIRRRYGRVQREALTPPDLIVIDGGQGQVNIAKQVIQEELGLDIPIAGLQKNDKHQTHELLFGDPLEVVDLSRNSQEFFLLQRIQDEVHRFAITFHRQLRSKNSFSSQLDGIDGLGPKRKQNLMKHFKSLTKIKEASVDEIVEVGVPRVVAEAVQRKLNPQGEALPQVAEERVDYQTEGNHNEP</sequence>
<evidence type="ECO:0000255" key="1">
    <source>
        <dbReference type="HAMAP-Rule" id="MF_00203"/>
    </source>
</evidence>
<evidence type="ECO:0000256" key="2">
    <source>
        <dbReference type="SAM" id="MobiDB-lite"/>
    </source>
</evidence>
<keyword id="KW-0963">Cytoplasm</keyword>
<keyword id="KW-0227">DNA damage</keyword>
<keyword id="KW-0228">DNA excision</keyword>
<keyword id="KW-0234">DNA repair</keyword>
<keyword id="KW-0267">Excision nuclease</keyword>
<keyword id="KW-1185">Reference proteome</keyword>
<keyword id="KW-0742">SOS response</keyword>
<name>UVRC_STRPN</name>
<dbReference type="EMBL" id="AE005672">
    <property type="protein sequence ID" value="AAK74770.1"/>
    <property type="molecule type" value="Genomic_DNA"/>
</dbReference>
<dbReference type="PIR" id="A95072">
    <property type="entry name" value="A95072"/>
</dbReference>
<dbReference type="RefSeq" id="WP_001061130.1">
    <property type="nucleotide sequence ID" value="NZ_CP155539.1"/>
</dbReference>
<dbReference type="SMR" id="Q97S07"/>
<dbReference type="PaxDb" id="170187-SP_0618"/>
<dbReference type="EnsemblBacteria" id="AAK74770">
    <property type="protein sequence ID" value="AAK74770"/>
    <property type="gene ID" value="SP_0618"/>
</dbReference>
<dbReference type="KEGG" id="spn:SP_0618"/>
<dbReference type="eggNOG" id="COG0322">
    <property type="taxonomic scope" value="Bacteria"/>
</dbReference>
<dbReference type="PhylomeDB" id="Q97S07"/>
<dbReference type="BioCyc" id="SPNE170187:G1FZB-634-MONOMER"/>
<dbReference type="Proteomes" id="UP000000585">
    <property type="component" value="Chromosome"/>
</dbReference>
<dbReference type="GO" id="GO:0005737">
    <property type="term" value="C:cytoplasm"/>
    <property type="evidence" value="ECO:0007669"/>
    <property type="project" value="UniProtKB-SubCell"/>
</dbReference>
<dbReference type="GO" id="GO:0009380">
    <property type="term" value="C:excinuclease repair complex"/>
    <property type="evidence" value="ECO:0007669"/>
    <property type="project" value="InterPro"/>
</dbReference>
<dbReference type="GO" id="GO:0003677">
    <property type="term" value="F:DNA binding"/>
    <property type="evidence" value="ECO:0007669"/>
    <property type="project" value="UniProtKB-UniRule"/>
</dbReference>
<dbReference type="GO" id="GO:0009381">
    <property type="term" value="F:excinuclease ABC activity"/>
    <property type="evidence" value="ECO:0007669"/>
    <property type="project" value="UniProtKB-UniRule"/>
</dbReference>
<dbReference type="GO" id="GO:0006289">
    <property type="term" value="P:nucleotide-excision repair"/>
    <property type="evidence" value="ECO:0007669"/>
    <property type="project" value="UniProtKB-UniRule"/>
</dbReference>
<dbReference type="GO" id="GO:0009432">
    <property type="term" value="P:SOS response"/>
    <property type="evidence" value="ECO:0007669"/>
    <property type="project" value="UniProtKB-UniRule"/>
</dbReference>
<dbReference type="CDD" id="cd10434">
    <property type="entry name" value="GIY-YIG_UvrC_Cho"/>
    <property type="match status" value="1"/>
</dbReference>
<dbReference type="FunFam" id="1.10.150.20:FF:000005">
    <property type="entry name" value="UvrABC system protein C"/>
    <property type="match status" value="1"/>
</dbReference>
<dbReference type="FunFam" id="3.30.420.340:FF:000002">
    <property type="entry name" value="UvrABC system protein C"/>
    <property type="match status" value="1"/>
</dbReference>
<dbReference type="FunFam" id="3.40.1440.10:FF:000001">
    <property type="entry name" value="UvrABC system protein C"/>
    <property type="match status" value="1"/>
</dbReference>
<dbReference type="FunFam" id="4.10.860.10:FF:000007">
    <property type="entry name" value="UvrABC system protein C"/>
    <property type="match status" value="1"/>
</dbReference>
<dbReference type="Gene3D" id="1.10.150.20">
    <property type="entry name" value="5' to 3' exonuclease, C-terminal subdomain"/>
    <property type="match status" value="1"/>
</dbReference>
<dbReference type="Gene3D" id="3.40.1440.10">
    <property type="entry name" value="GIY-YIG endonuclease"/>
    <property type="match status" value="1"/>
</dbReference>
<dbReference type="Gene3D" id="4.10.860.10">
    <property type="entry name" value="UVR domain"/>
    <property type="match status" value="1"/>
</dbReference>
<dbReference type="Gene3D" id="3.30.420.340">
    <property type="entry name" value="UvrC, RNAse H endonuclease domain"/>
    <property type="match status" value="1"/>
</dbReference>
<dbReference type="HAMAP" id="MF_00203">
    <property type="entry name" value="UvrC"/>
    <property type="match status" value="1"/>
</dbReference>
<dbReference type="InterPro" id="IPR000305">
    <property type="entry name" value="GIY-YIG_endonuc"/>
</dbReference>
<dbReference type="InterPro" id="IPR035901">
    <property type="entry name" value="GIY-YIG_endonuc_sf"/>
</dbReference>
<dbReference type="InterPro" id="IPR047296">
    <property type="entry name" value="GIY-YIG_UvrC_Cho"/>
</dbReference>
<dbReference type="InterPro" id="IPR010994">
    <property type="entry name" value="RuvA_2-like"/>
</dbReference>
<dbReference type="InterPro" id="IPR001943">
    <property type="entry name" value="UVR_dom"/>
</dbReference>
<dbReference type="InterPro" id="IPR036876">
    <property type="entry name" value="UVR_dom_sf"/>
</dbReference>
<dbReference type="InterPro" id="IPR050066">
    <property type="entry name" value="UvrABC_protein_C"/>
</dbReference>
<dbReference type="InterPro" id="IPR004791">
    <property type="entry name" value="UvrC"/>
</dbReference>
<dbReference type="InterPro" id="IPR001162">
    <property type="entry name" value="UvrC_RNase_H_dom"/>
</dbReference>
<dbReference type="InterPro" id="IPR038476">
    <property type="entry name" value="UvrC_RNase_H_dom_sf"/>
</dbReference>
<dbReference type="NCBIfam" id="TIGR00194">
    <property type="entry name" value="uvrC"/>
    <property type="match status" value="1"/>
</dbReference>
<dbReference type="PANTHER" id="PTHR30562:SF1">
    <property type="entry name" value="UVRABC SYSTEM PROTEIN C"/>
    <property type="match status" value="1"/>
</dbReference>
<dbReference type="PANTHER" id="PTHR30562">
    <property type="entry name" value="UVRC/OXIDOREDUCTASE"/>
    <property type="match status" value="1"/>
</dbReference>
<dbReference type="Pfam" id="PF01541">
    <property type="entry name" value="GIY-YIG"/>
    <property type="match status" value="1"/>
</dbReference>
<dbReference type="Pfam" id="PF02151">
    <property type="entry name" value="UVR"/>
    <property type="match status" value="1"/>
</dbReference>
<dbReference type="Pfam" id="PF22920">
    <property type="entry name" value="UvrC_RNaseH"/>
    <property type="match status" value="1"/>
</dbReference>
<dbReference type="Pfam" id="PF08459">
    <property type="entry name" value="UvrC_RNaseH_dom"/>
    <property type="match status" value="1"/>
</dbReference>
<dbReference type="SMART" id="SM00465">
    <property type="entry name" value="GIYc"/>
    <property type="match status" value="1"/>
</dbReference>
<dbReference type="SUPFAM" id="SSF46600">
    <property type="entry name" value="C-terminal UvrC-binding domain of UvrB"/>
    <property type="match status" value="1"/>
</dbReference>
<dbReference type="SUPFAM" id="SSF82771">
    <property type="entry name" value="GIY-YIG endonuclease"/>
    <property type="match status" value="1"/>
</dbReference>
<dbReference type="SUPFAM" id="SSF47781">
    <property type="entry name" value="RuvA domain 2-like"/>
    <property type="match status" value="1"/>
</dbReference>
<dbReference type="PROSITE" id="PS50164">
    <property type="entry name" value="GIY_YIG"/>
    <property type="match status" value="1"/>
</dbReference>
<dbReference type="PROSITE" id="PS50151">
    <property type="entry name" value="UVR"/>
    <property type="match status" value="1"/>
</dbReference>
<dbReference type="PROSITE" id="PS50165">
    <property type="entry name" value="UVRC"/>
    <property type="match status" value="1"/>
</dbReference>
<organism>
    <name type="scientific">Streptococcus pneumoniae serotype 4 (strain ATCC BAA-334 / TIGR4)</name>
    <dbReference type="NCBI Taxonomy" id="170187"/>
    <lineage>
        <taxon>Bacteria</taxon>
        <taxon>Bacillati</taxon>
        <taxon>Bacillota</taxon>
        <taxon>Bacilli</taxon>
        <taxon>Lactobacillales</taxon>
        <taxon>Streptococcaceae</taxon>
        <taxon>Streptococcus</taxon>
    </lineage>
</organism>
<protein>
    <recommendedName>
        <fullName evidence="1">UvrABC system protein C</fullName>
        <shortName evidence="1">Protein UvrC</shortName>
    </recommendedName>
    <alternativeName>
        <fullName evidence="1">Excinuclease ABC subunit C</fullName>
    </alternativeName>
</protein>
<accession>Q97S07</accession>
<proteinExistence type="inferred from homology"/>
<gene>
    <name evidence="1" type="primary">uvrC</name>
    <name type="ordered locus">SP_0618</name>
</gene>
<feature type="chain" id="PRO_0000138346" description="UvrABC system protein C">
    <location>
        <begin position="1"/>
        <end position="614"/>
    </location>
</feature>
<feature type="domain" description="GIY-YIG" evidence="1">
    <location>
        <begin position="14"/>
        <end position="91"/>
    </location>
</feature>
<feature type="domain" description="UVR" evidence="1">
    <location>
        <begin position="196"/>
        <end position="231"/>
    </location>
</feature>
<feature type="region of interest" description="Disordered" evidence="2">
    <location>
        <begin position="595"/>
        <end position="614"/>
    </location>
</feature>
<feature type="compositionally biased region" description="Basic and acidic residues" evidence="2">
    <location>
        <begin position="599"/>
        <end position="614"/>
    </location>
</feature>
<comment type="function">
    <text evidence="1">The UvrABC repair system catalyzes the recognition and processing of DNA lesions. UvrC both incises the 5' and 3' sides of the lesion. The N-terminal half is responsible for the 3' incision and the C-terminal half is responsible for the 5' incision.</text>
</comment>
<comment type="subunit">
    <text evidence="1">Interacts with UvrB in an incision complex.</text>
</comment>
<comment type="subcellular location">
    <subcellularLocation>
        <location evidence="1">Cytoplasm</location>
    </subcellularLocation>
</comment>
<comment type="similarity">
    <text evidence="1">Belongs to the UvrC family.</text>
</comment>